<reference key="1">
    <citation type="journal article" date="2008" name="PLoS ONE">
        <title>A recalibrated molecular clock and independent origins for the cholera pandemic clones.</title>
        <authorList>
            <person name="Feng L."/>
            <person name="Reeves P.R."/>
            <person name="Lan R."/>
            <person name="Ren Y."/>
            <person name="Gao C."/>
            <person name="Zhou Z."/>
            <person name="Ren Y."/>
            <person name="Cheng J."/>
            <person name="Wang W."/>
            <person name="Wang J."/>
            <person name="Qian W."/>
            <person name="Li D."/>
            <person name="Wang L."/>
        </authorList>
    </citation>
    <scope>NUCLEOTIDE SEQUENCE [LARGE SCALE GENOMIC DNA]</scope>
    <source>
        <strain>M66-2</strain>
    </source>
</reference>
<accession>C3LR47</accession>
<comment type="function">
    <text evidence="1">Transcription regulator that activates transcription by stimulating RNA polymerase (RNAP) recycling in case of stress conditions such as supercoiled DNA or high salt concentrations. Probably acts by releasing the RNAP, when it is trapped or immobilized on tightly supercoiled DNA. Does not activate transcription on linear DNA. Probably not involved in DNA repair.</text>
</comment>
<comment type="subunit">
    <text evidence="1">Interacts with the RNAP. Has a higher affinity for the core RNAP than for the holoenzyme. Its ATPase activity is stimulated by binding to RNAP.</text>
</comment>
<comment type="similarity">
    <text evidence="1">Belongs to the SNF2/RAD54 helicase family. RapA subfamily.</text>
</comment>
<name>RAPA_VIBCM</name>
<keyword id="KW-0010">Activator</keyword>
<keyword id="KW-0067">ATP-binding</keyword>
<keyword id="KW-0238">DNA-binding</keyword>
<keyword id="KW-0347">Helicase</keyword>
<keyword id="KW-0378">Hydrolase</keyword>
<keyword id="KW-0547">Nucleotide-binding</keyword>
<keyword id="KW-0804">Transcription</keyword>
<keyword id="KW-0805">Transcription regulation</keyword>
<sequence length="969" mass="109440">MSFALGQRWISDTESDLGLGTVVALDARTVTLMFAASEENRVYARSDAPVTRVIFNVGDVVDSQQGWSLQVEQVVEDQGVYTYLGTRVDTEESGVALREIFLSNQIRFNKPQDKLFAGQIDRMDNFVLRYRALTNQYQQHKSPMRGLCGMRAGLIPHQLYIAHEVGRRHAPRVLLADEVGLGKTIEAGMIIHQQVLTGRAERILIVVPETLQHQWLVEMMRRFNLHFSIFDEERCVEAFSEADNPFETQQYVLCSLDFLRKSRQRFEQALEAEWDLLVVDEAHHLEWHPEKPSREYQVIEALAEQTPGVLLLTATPEQLGRESHFARLRLLDADRFYDYEAFVKEEEQYAPVADAVTALFSGEKLSDEAKNKITELLSEQDVEPLFKALESHASEDEIALARQELIDNLMDRHGTGRVLFRNTRAAIKGFPVRNVHLLPLEIPSQYTTSMRVAGMLGGKLTPEARAMKMLYPEEIFQEFEGEESSWWQFDSRVNWLLEKVKAKRSEKILVIASRASTALQLEQALREREGIRATVFHEGMSIIERDKAAAYFAQEEGGAQVLICSEIGSEGRNFQFANQLVMFDLPFNPDLLEQRIGRLDRIGQKRDIDVYVPYLTETSQAILARWFQEGLNAFAETCPTGRAVYDAFAERLIPILAAGGGEELEVIIEESAKLNKTLKSQLEVGRDRLLEMHSNGGEKAQQIAEQIAKTDGDTNLVTFALSLFDAIGLHQEDRGENALVVTPAEHMMVPSYPGLPYEGATITFDRDTALSREDMHFISWEHPMVQGGIDLLMSEGVGTCAVSLLKNKALPVGTILLELVYVVDAQAPKRSGISRFLPVSPIRILMDARGNDLSSQVEFESFNRQLSPVNRHLASKLVSSVQHDVHRLITASETAVEPRVSAIREQAQRDMQQSLNSELERLLALKAVNPNIRDEEIEVLDQQIKELTGYIAQAQYQLDSLRLIVVAHN</sequence>
<evidence type="ECO:0000255" key="1">
    <source>
        <dbReference type="HAMAP-Rule" id="MF_01821"/>
    </source>
</evidence>
<dbReference type="EC" id="3.6.4.-" evidence="1"/>
<dbReference type="EMBL" id="CP001233">
    <property type="protein sequence ID" value="ACP06725.1"/>
    <property type="molecule type" value="Genomic_DNA"/>
</dbReference>
<dbReference type="RefSeq" id="WP_000006492.1">
    <property type="nucleotide sequence ID" value="NC_012578.1"/>
</dbReference>
<dbReference type="SMR" id="C3LR47"/>
<dbReference type="KEGG" id="vcm:VCM66_2428"/>
<dbReference type="HOGENOM" id="CLU_011520_0_0_6"/>
<dbReference type="Proteomes" id="UP000001217">
    <property type="component" value="Chromosome I"/>
</dbReference>
<dbReference type="GO" id="GO:0005524">
    <property type="term" value="F:ATP binding"/>
    <property type="evidence" value="ECO:0007669"/>
    <property type="project" value="UniProtKB-UniRule"/>
</dbReference>
<dbReference type="GO" id="GO:0003677">
    <property type="term" value="F:DNA binding"/>
    <property type="evidence" value="ECO:0007669"/>
    <property type="project" value="UniProtKB-KW"/>
</dbReference>
<dbReference type="GO" id="GO:0004386">
    <property type="term" value="F:helicase activity"/>
    <property type="evidence" value="ECO:0007669"/>
    <property type="project" value="UniProtKB-UniRule"/>
</dbReference>
<dbReference type="GO" id="GO:0016817">
    <property type="term" value="F:hydrolase activity, acting on acid anhydrides"/>
    <property type="evidence" value="ECO:0007669"/>
    <property type="project" value="InterPro"/>
</dbReference>
<dbReference type="GO" id="GO:0006355">
    <property type="term" value="P:regulation of DNA-templated transcription"/>
    <property type="evidence" value="ECO:0007669"/>
    <property type="project" value="UniProtKB-UniRule"/>
</dbReference>
<dbReference type="CDD" id="cd18011">
    <property type="entry name" value="DEXDc_RapA"/>
    <property type="match status" value="1"/>
</dbReference>
<dbReference type="CDD" id="cd18793">
    <property type="entry name" value="SF2_C_SNF"/>
    <property type="match status" value="1"/>
</dbReference>
<dbReference type="FunFam" id="3.40.50.10810:FF:000012">
    <property type="entry name" value="RNA polymerase-associated protein RapA"/>
    <property type="match status" value="1"/>
</dbReference>
<dbReference type="Gene3D" id="2.30.30.140">
    <property type="match status" value="1"/>
</dbReference>
<dbReference type="Gene3D" id="2.30.30.930">
    <property type="match status" value="1"/>
</dbReference>
<dbReference type="Gene3D" id="3.30.360.80">
    <property type="match status" value="1"/>
</dbReference>
<dbReference type="Gene3D" id="6.10.140.1500">
    <property type="match status" value="1"/>
</dbReference>
<dbReference type="Gene3D" id="6.10.140.2230">
    <property type="match status" value="1"/>
</dbReference>
<dbReference type="Gene3D" id="3.40.50.300">
    <property type="entry name" value="P-loop containing nucleotide triphosphate hydrolases"/>
    <property type="match status" value="1"/>
</dbReference>
<dbReference type="Gene3D" id="3.40.50.10810">
    <property type="entry name" value="Tandem AAA-ATPase domain"/>
    <property type="match status" value="1"/>
</dbReference>
<dbReference type="HAMAP" id="MF_01821">
    <property type="entry name" value="Helicase_RapA"/>
    <property type="match status" value="1"/>
</dbReference>
<dbReference type="InterPro" id="IPR014001">
    <property type="entry name" value="Helicase_ATP-bd"/>
</dbReference>
<dbReference type="InterPro" id="IPR001650">
    <property type="entry name" value="Helicase_C-like"/>
</dbReference>
<dbReference type="InterPro" id="IPR023949">
    <property type="entry name" value="Helicase_RapA"/>
</dbReference>
<dbReference type="InterPro" id="IPR027417">
    <property type="entry name" value="P-loop_NTPase"/>
</dbReference>
<dbReference type="InterPro" id="IPR022737">
    <property type="entry name" value="RapA_C"/>
</dbReference>
<dbReference type="InterPro" id="IPR038718">
    <property type="entry name" value="SNF2-like_sf"/>
</dbReference>
<dbReference type="InterPro" id="IPR049730">
    <property type="entry name" value="SNF2/RAD54-like_C"/>
</dbReference>
<dbReference type="InterPro" id="IPR000330">
    <property type="entry name" value="SNF2_N"/>
</dbReference>
<dbReference type="InterPro" id="IPR040765">
    <property type="entry name" value="Tudor_1_RapA"/>
</dbReference>
<dbReference type="InterPro" id="IPR040766">
    <property type="entry name" value="Tudor_2_RapA"/>
</dbReference>
<dbReference type="NCBIfam" id="NF003426">
    <property type="entry name" value="PRK04914.1"/>
    <property type="match status" value="1"/>
</dbReference>
<dbReference type="PANTHER" id="PTHR45766">
    <property type="entry name" value="DNA ANNEALING HELICASE AND ENDONUCLEASE ZRANB3 FAMILY MEMBER"/>
    <property type="match status" value="1"/>
</dbReference>
<dbReference type="PANTHER" id="PTHR45766:SF6">
    <property type="entry name" value="SWI_SNF-RELATED MATRIX-ASSOCIATED ACTIN-DEPENDENT REGULATOR OF CHROMATIN SUBFAMILY A-LIKE PROTEIN 1"/>
    <property type="match status" value="1"/>
</dbReference>
<dbReference type="Pfam" id="PF00271">
    <property type="entry name" value="Helicase_C"/>
    <property type="match status" value="1"/>
</dbReference>
<dbReference type="Pfam" id="PF12137">
    <property type="entry name" value="RapA_C"/>
    <property type="match status" value="1"/>
</dbReference>
<dbReference type="Pfam" id="PF00176">
    <property type="entry name" value="SNF2-rel_dom"/>
    <property type="match status" value="1"/>
</dbReference>
<dbReference type="Pfam" id="PF18339">
    <property type="entry name" value="Tudor_1_RapA"/>
    <property type="match status" value="1"/>
</dbReference>
<dbReference type="Pfam" id="PF18337">
    <property type="entry name" value="Tudor_RapA"/>
    <property type="match status" value="1"/>
</dbReference>
<dbReference type="SMART" id="SM00487">
    <property type="entry name" value="DEXDc"/>
    <property type="match status" value="1"/>
</dbReference>
<dbReference type="SMART" id="SM00490">
    <property type="entry name" value="HELICc"/>
    <property type="match status" value="1"/>
</dbReference>
<dbReference type="SUPFAM" id="SSF52540">
    <property type="entry name" value="P-loop containing nucleoside triphosphate hydrolases"/>
    <property type="match status" value="2"/>
</dbReference>
<dbReference type="PROSITE" id="PS51192">
    <property type="entry name" value="HELICASE_ATP_BIND_1"/>
    <property type="match status" value="1"/>
</dbReference>
<dbReference type="PROSITE" id="PS51194">
    <property type="entry name" value="HELICASE_CTER"/>
    <property type="match status" value="1"/>
</dbReference>
<proteinExistence type="inferred from homology"/>
<feature type="chain" id="PRO_1000188194" description="RNA polymerase-associated protein RapA">
    <location>
        <begin position="1"/>
        <end position="969"/>
    </location>
</feature>
<feature type="domain" description="Helicase ATP-binding" evidence="1">
    <location>
        <begin position="164"/>
        <end position="334"/>
    </location>
</feature>
<feature type="domain" description="Helicase C-terminal" evidence="1">
    <location>
        <begin position="492"/>
        <end position="646"/>
    </location>
</feature>
<feature type="short sequence motif" description="DEAH box">
    <location>
        <begin position="280"/>
        <end position="283"/>
    </location>
</feature>
<feature type="binding site" evidence="1">
    <location>
        <begin position="177"/>
        <end position="184"/>
    </location>
    <ligand>
        <name>ATP</name>
        <dbReference type="ChEBI" id="CHEBI:30616"/>
    </ligand>
</feature>
<organism>
    <name type="scientific">Vibrio cholerae serotype O1 (strain M66-2)</name>
    <dbReference type="NCBI Taxonomy" id="579112"/>
    <lineage>
        <taxon>Bacteria</taxon>
        <taxon>Pseudomonadati</taxon>
        <taxon>Pseudomonadota</taxon>
        <taxon>Gammaproteobacteria</taxon>
        <taxon>Vibrionales</taxon>
        <taxon>Vibrionaceae</taxon>
        <taxon>Vibrio</taxon>
    </lineage>
</organism>
<gene>
    <name evidence="1" type="primary">rapA</name>
    <name type="ordered locus">VCM66_2428</name>
</gene>
<protein>
    <recommendedName>
        <fullName evidence="1">RNA polymerase-associated protein RapA</fullName>
        <ecNumber evidence="1">3.6.4.-</ecNumber>
    </recommendedName>
    <alternativeName>
        <fullName evidence="1">ATP-dependent helicase HepA</fullName>
    </alternativeName>
</protein>